<comment type="function">
    <text evidence="1">Catalyzes the excretion of spermidine.</text>
</comment>
<comment type="subunit">
    <text evidence="1">Forms a complex with MdtJ.</text>
</comment>
<comment type="subcellular location">
    <subcellularLocation>
        <location evidence="1">Cell inner membrane</location>
        <topology evidence="1">Multi-pass membrane protein</topology>
    </subcellularLocation>
</comment>
<comment type="similarity">
    <text evidence="1">Belongs to the drug/metabolite transporter (DMT) superfamily. Small multidrug resistance (SMR) (TC 2.A.7.1) family. MdtI subfamily.</text>
</comment>
<accession>B4TVE9</accession>
<name>MDTI_SALSV</name>
<organism>
    <name type="scientific">Salmonella schwarzengrund (strain CVM19633)</name>
    <dbReference type="NCBI Taxonomy" id="439843"/>
    <lineage>
        <taxon>Bacteria</taxon>
        <taxon>Pseudomonadati</taxon>
        <taxon>Pseudomonadota</taxon>
        <taxon>Gammaproteobacteria</taxon>
        <taxon>Enterobacterales</taxon>
        <taxon>Enterobacteriaceae</taxon>
        <taxon>Salmonella</taxon>
    </lineage>
</organism>
<reference key="1">
    <citation type="journal article" date="2011" name="J. Bacteriol.">
        <title>Comparative genomics of 28 Salmonella enterica isolates: evidence for CRISPR-mediated adaptive sublineage evolution.</title>
        <authorList>
            <person name="Fricke W.F."/>
            <person name="Mammel M.K."/>
            <person name="McDermott P.F."/>
            <person name="Tartera C."/>
            <person name="White D.G."/>
            <person name="Leclerc J.E."/>
            <person name="Ravel J."/>
            <person name="Cebula T.A."/>
        </authorList>
    </citation>
    <scope>NUCLEOTIDE SEQUENCE [LARGE SCALE GENOMIC DNA]</scope>
    <source>
        <strain>CVM19633</strain>
    </source>
</reference>
<protein>
    <recommendedName>
        <fullName evidence="1">Spermidine export protein MdtI</fullName>
    </recommendedName>
</protein>
<proteinExistence type="inferred from homology"/>
<gene>
    <name evidence="1" type="primary">mdtI</name>
    <name type="ordered locus">SeSA_A1584</name>
</gene>
<sequence>MQQFEWIHGAWLGLAIMLEIAANVLLKFSDGFRRKCYGILSLAAVLAAFSALSQAVKGIDLSVAYALWGGFGIAATLAAGWVLFGQRLNPKGWVGVILLLAGMVMIKFA</sequence>
<keyword id="KW-0997">Cell inner membrane</keyword>
<keyword id="KW-1003">Cell membrane</keyword>
<keyword id="KW-0472">Membrane</keyword>
<keyword id="KW-0812">Transmembrane</keyword>
<keyword id="KW-1133">Transmembrane helix</keyword>
<keyword id="KW-0813">Transport</keyword>
<dbReference type="EMBL" id="CP001127">
    <property type="protein sequence ID" value="ACF91670.1"/>
    <property type="molecule type" value="Genomic_DNA"/>
</dbReference>
<dbReference type="RefSeq" id="WP_001183821.1">
    <property type="nucleotide sequence ID" value="NC_011094.1"/>
</dbReference>
<dbReference type="SMR" id="B4TVE9"/>
<dbReference type="KEGG" id="sew:SeSA_A1584"/>
<dbReference type="HOGENOM" id="CLU_133067_0_4_6"/>
<dbReference type="Proteomes" id="UP000001865">
    <property type="component" value="Chromosome"/>
</dbReference>
<dbReference type="GO" id="GO:0005886">
    <property type="term" value="C:plasma membrane"/>
    <property type="evidence" value="ECO:0007669"/>
    <property type="project" value="UniProtKB-SubCell"/>
</dbReference>
<dbReference type="GO" id="GO:0015199">
    <property type="term" value="F:amino-acid betaine transmembrane transporter activity"/>
    <property type="evidence" value="ECO:0007669"/>
    <property type="project" value="TreeGrafter"/>
</dbReference>
<dbReference type="GO" id="GO:0015297">
    <property type="term" value="F:antiporter activity"/>
    <property type="evidence" value="ECO:0007669"/>
    <property type="project" value="TreeGrafter"/>
</dbReference>
<dbReference type="GO" id="GO:0015220">
    <property type="term" value="F:choline transmembrane transporter activity"/>
    <property type="evidence" value="ECO:0007669"/>
    <property type="project" value="TreeGrafter"/>
</dbReference>
<dbReference type="GO" id="GO:0015606">
    <property type="term" value="F:spermidine transmembrane transporter activity"/>
    <property type="evidence" value="ECO:0007669"/>
    <property type="project" value="UniProtKB-UniRule"/>
</dbReference>
<dbReference type="GO" id="GO:0031460">
    <property type="term" value="P:glycine betaine transport"/>
    <property type="evidence" value="ECO:0007669"/>
    <property type="project" value="TreeGrafter"/>
</dbReference>
<dbReference type="FunFam" id="1.10.3730.20:FF:000001">
    <property type="entry name" value="Quaternary ammonium compound resistance transporter SugE"/>
    <property type="match status" value="1"/>
</dbReference>
<dbReference type="Gene3D" id="1.10.3730.20">
    <property type="match status" value="1"/>
</dbReference>
<dbReference type="HAMAP" id="MF_01597">
    <property type="entry name" value="MdtI"/>
    <property type="match status" value="1"/>
</dbReference>
<dbReference type="InterPro" id="IPR000390">
    <property type="entry name" value="Small_drug/metabolite_transptr"/>
</dbReference>
<dbReference type="InterPro" id="IPR045324">
    <property type="entry name" value="Small_multidrug_res"/>
</dbReference>
<dbReference type="InterPro" id="IPR023737">
    <property type="entry name" value="Spermidine_export_MdtI"/>
</dbReference>
<dbReference type="NCBIfam" id="NF007934">
    <property type="entry name" value="PRK10650.1"/>
    <property type="match status" value="1"/>
</dbReference>
<dbReference type="PANTHER" id="PTHR30561">
    <property type="entry name" value="SMR FAMILY PROTON-DEPENDENT DRUG EFFLUX TRANSPORTER SUGE"/>
    <property type="match status" value="1"/>
</dbReference>
<dbReference type="PANTHER" id="PTHR30561:SF6">
    <property type="entry name" value="SPERMIDINE EXPORT PROTEIN MDTI"/>
    <property type="match status" value="1"/>
</dbReference>
<dbReference type="Pfam" id="PF00893">
    <property type="entry name" value="Multi_Drug_Res"/>
    <property type="match status" value="1"/>
</dbReference>
<dbReference type="SUPFAM" id="SSF103481">
    <property type="entry name" value="Multidrug resistance efflux transporter EmrE"/>
    <property type="match status" value="1"/>
</dbReference>
<feature type="chain" id="PRO_1000197324" description="Spermidine export protein MdtI">
    <location>
        <begin position="1"/>
        <end position="109"/>
    </location>
</feature>
<feature type="transmembrane region" description="Helical" evidence="1">
    <location>
        <begin position="6"/>
        <end position="26"/>
    </location>
</feature>
<feature type="transmembrane region" description="Helical" evidence="1">
    <location>
        <begin position="36"/>
        <end position="56"/>
    </location>
</feature>
<feature type="transmembrane region" description="Helical" evidence="1">
    <location>
        <begin position="64"/>
        <end position="84"/>
    </location>
</feature>
<feature type="transmembrane region" description="Helical" evidence="1">
    <location>
        <begin position="88"/>
        <end position="108"/>
    </location>
</feature>
<evidence type="ECO:0000255" key="1">
    <source>
        <dbReference type="HAMAP-Rule" id="MF_01597"/>
    </source>
</evidence>